<gene>
    <name type="primary">HBB</name>
</gene>
<organism>
    <name type="scientific">Ailuropoda melanoleuca</name>
    <name type="common">Giant panda</name>
    <dbReference type="NCBI Taxonomy" id="9646"/>
    <lineage>
        <taxon>Eukaryota</taxon>
        <taxon>Metazoa</taxon>
        <taxon>Chordata</taxon>
        <taxon>Craniata</taxon>
        <taxon>Vertebrata</taxon>
        <taxon>Euteleostomi</taxon>
        <taxon>Mammalia</taxon>
        <taxon>Eutheria</taxon>
        <taxon>Laurasiatheria</taxon>
        <taxon>Carnivora</taxon>
        <taxon>Caniformia</taxon>
        <taxon>Ursidae</taxon>
        <taxon>Ailuropoda</taxon>
    </lineage>
</organism>
<feature type="initiator methionine" description="Removed" evidence="1 4">
    <location>
        <position position="1"/>
    </location>
</feature>
<feature type="chain" id="PRO_0000052859" description="Hemoglobin subunit beta">
    <location>
        <begin position="2"/>
        <end position="147"/>
    </location>
</feature>
<feature type="domain" description="Globin" evidence="3">
    <location>
        <begin position="3"/>
        <end position="147"/>
    </location>
</feature>
<feature type="binding site" description="distal binding residue">
    <location>
        <position position="64"/>
    </location>
    <ligand>
        <name>heme b</name>
        <dbReference type="ChEBI" id="CHEBI:60344"/>
    </ligand>
    <ligandPart>
        <name>Fe</name>
        <dbReference type="ChEBI" id="CHEBI:18248"/>
    </ligandPart>
</feature>
<feature type="binding site" description="proximal binding residue">
    <location>
        <position position="93"/>
    </location>
    <ligand>
        <name>heme b</name>
        <dbReference type="ChEBI" id="CHEBI:60344"/>
    </ligand>
    <ligandPart>
        <name>Fe</name>
        <dbReference type="ChEBI" id="CHEBI:18248"/>
    </ligandPart>
</feature>
<feature type="modified residue" description="N-acetylvaline" evidence="1">
    <location>
        <position position="2"/>
    </location>
</feature>
<feature type="modified residue" description="Phosphothreonine" evidence="2">
    <location>
        <position position="13"/>
    </location>
</feature>
<feature type="modified residue" description="Phosphoserine" evidence="2">
    <location>
        <position position="45"/>
    </location>
</feature>
<feature type="modified residue" description="N6-acetyllysine" evidence="2">
    <location>
        <position position="60"/>
    </location>
</feature>
<feature type="modified residue" description="N6-acetyllysine" evidence="2">
    <location>
        <position position="83"/>
    </location>
</feature>
<feature type="modified residue" description="S-nitrosocysteine" evidence="2">
    <location>
        <position position="94"/>
    </location>
</feature>
<feature type="modified residue" description="N6-acetyllysine" evidence="2">
    <location>
        <position position="145"/>
    </location>
</feature>
<feature type="sequence conflict" description="In Ref. 1; AAV28720." evidence="5" ref="1">
    <original>G</original>
    <variation>S</variation>
    <location>
        <position position="108"/>
    </location>
</feature>
<evidence type="ECO:0000250" key="1">
    <source>
        <dbReference type="UniProtKB" id="P02086"/>
    </source>
</evidence>
<evidence type="ECO:0000250" key="2">
    <source>
        <dbReference type="UniProtKB" id="P68871"/>
    </source>
</evidence>
<evidence type="ECO:0000255" key="3">
    <source>
        <dbReference type="PROSITE-ProRule" id="PRU00238"/>
    </source>
</evidence>
<evidence type="ECO:0000269" key="4">
    <source>
    </source>
</evidence>
<evidence type="ECO:0000305" key="5"/>
<name>HBB_AILME</name>
<accession>P18983</accession>
<accession>Q5XLE6</accession>
<protein>
    <recommendedName>
        <fullName>Hemoglobin subunit beta</fullName>
    </recommendedName>
    <alternativeName>
        <fullName>Beta-globin</fullName>
    </alternativeName>
    <alternativeName>
        <fullName>Hemoglobin beta chain</fullName>
    </alternativeName>
</protein>
<reference key="1">
    <citation type="submission" date="2004-09" db="EMBL/GenBank/DDBJ databases">
        <title>Construction of the liver and brain cDNA libraries of the giant panda.</title>
        <authorList>
            <person name="He P."/>
            <person name="Fang S."/>
        </authorList>
    </citation>
    <scope>NUCLEOTIDE SEQUENCE [MRNA]</scope>
</reference>
<reference key="2">
    <citation type="journal article" date="1986" name="Naturwissenschaften">
        <title>Hemoglobin of pandas: phylogenetic relationships of carnivores as ascertained with protein sequence data.</title>
        <authorList>
            <person name="Tagle D.A."/>
            <person name="Miyamoto M.M."/>
            <person name="Goodman M."/>
            <person name="Hofmann O."/>
            <person name="Braunitzer G."/>
            <person name="Goeltenboth R."/>
            <person name="Jalanka H."/>
        </authorList>
    </citation>
    <scope>PROTEIN SEQUENCE OF 2-147</scope>
</reference>
<comment type="function">
    <text>Involved in oxygen transport from the lung to the various peripheral tissues.</text>
</comment>
<comment type="subunit">
    <text>Heterotetramer of two alpha chains and two beta chains.</text>
</comment>
<comment type="tissue specificity">
    <text>Red blood cells.</text>
</comment>
<comment type="similarity">
    <text evidence="3">Belongs to the globin family.</text>
</comment>
<proteinExistence type="evidence at protein level"/>
<keyword id="KW-0007">Acetylation</keyword>
<keyword id="KW-0903">Direct protein sequencing</keyword>
<keyword id="KW-0349">Heme</keyword>
<keyword id="KW-0408">Iron</keyword>
<keyword id="KW-0479">Metal-binding</keyword>
<keyword id="KW-0561">Oxygen transport</keyword>
<keyword id="KW-0597">Phosphoprotein</keyword>
<keyword id="KW-1185">Reference proteome</keyword>
<keyword id="KW-0702">S-nitrosylation</keyword>
<keyword id="KW-0813">Transport</keyword>
<dbReference type="EMBL" id="AY753985">
    <property type="protein sequence ID" value="AAV28720.1"/>
    <property type="molecule type" value="mRNA"/>
</dbReference>
<dbReference type="PIR" id="S06529">
    <property type="entry name" value="HBFQG"/>
</dbReference>
<dbReference type="RefSeq" id="NP_001291812.1">
    <property type="nucleotide sequence ID" value="NM_001304883.1"/>
</dbReference>
<dbReference type="SMR" id="P18983"/>
<dbReference type="STRING" id="9646.ENSAMEP00000014174"/>
<dbReference type="GeneID" id="100499573"/>
<dbReference type="KEGG" id="aml:100499573"/>
<dbReference type="eggNOG" id="KOG3378">
    <property type="taxonomic scope" value="Eukaryota"/>
</dbReference>
<dbReference type="HOGENOM" id="CLU_003827_10_0_1"/>
<dbReference type="InParanoid" id="P18983"/>
<dbReference type="OMA" id="LWGQIDV"/>
<dbReference type="OrthoDB" id="9886081at2759"/>
<dbReference type="TreeFam" id="TF333268"/>
<dbReference type="Proteomes" id="UP000008912">
    <property type="component" value="Unassembled WGS sequence"/>
</dbReference>
<dbReference type="GO" id="GO:0072562">
    <property type="term" value="C:blood microparticle"/>
    <property type="evidence" value="ECO:0007669"/>
    <property type="project" value="TreeGrafter"/>
</dbReference>
<dbReference type="GO" id="GO:0031838">
    <property type="term" value="C:haptoglobin-hemoglobin complex"/>
    <property type="evidence" value="ECO:0007669"/>
    <property type="project" value="TreeGrafter"/>
</dbReference>
<dbReference type="GO" id="GO:0005833">
    <property type="term" value="C:hemoglobin complex"/>
    <property type="evidence" value="ECO:0007669"/>
    <property type="project" value="InterPro"/>
</dbReference>
<dbReference type="GO" id="GO:0031720">
    <property type="term" value="F:haptoglobin binding"/>
    <property type="evidence" value="ECO:0007669"/>
    <property type="project" value="TreeGrafter"/>
</dbReference>
<dbReference type="GO" id="GO:0020037">
    <property type="term" value="F:heme binding"/>
    <property type="evidence" value="ECO:0007669"/>
    <property type="project" value="InterPro"/>
</dbReference>
<dbReference type="GO" id="GO:0031721">
    <property type="term" value="F:hemoglobin alpha binding"/>
    <property type="evidence" value="ECO:0007669"/>
    <property type="project" value="TreeGrafter"/>
</dbReference>
<dbReference type="GO" id="GO:0046872">
    <property type="term" value="F:metal ion binding"/>
    <property type="evidence" value="ECO:0007669"/>
    <property type="project" value="UniProtKB-KW"/>
</dbReference>
<dbReference type="GO" id="GO:0043177">
    <property type="term" value="F:organic acid binding"/>
    <property type="evidence" value="ECO:0007669"/>
    <property type="project" value="TreeGrafter"/>
</dbReference>
<dbReference type="GO" id="GO:0019825">
    <property type="term" value="F:oxygen binding"/>
    <property type="evidence" value="ECO:0007669"/>
    <property type="project" value="InterPro"/>
</dbReference>
<dbReference type="GO" id="GO:0005344">
    <property type="term" value="F:oxygen carrier activity"/>
    <property type="evidence" value="ECO:0007669"/>
    <property type="project" value="UniProtKB-KW"/>
</dbReference>
<dbReference type="GO" id="GO:0004601">
    <property type="term" value="F:peroxidase activity"/>
    <property type="evidence" value="ECO:0007669"/>
    <property type="project" value="TreeGrafter"/>
</dbReference>
<dbReference type="GO" id="GO:0042744">
    <property type="term" value="P:hydrogen peroxide catabolic process"/>
    <property type="evidence" value="ECO:0007669"/>
    <property type="project" value="TreeGrafter"/>
</dbReference>
<dbReference type="CDD" id="cd08925">
    <property type="entry name" value="Hb-beta-like"/>
    <property type="match status" value="1"/>
</dbReference>
<dbReference type="FunFam" id="1.10.490.10:FF:000001">
    <property type="entry name" value="Hemoglobin subunit beta"/>
    <property type="match status" value="1"/>
</dbReference>
<dbReference type="Gene3D" id="1.10.490.10">
    <property type="entry name" value="Globins"/>
    <property type="match status" value="1"/>
</dbReference>
<dbReference type="InterPro" id="IPR000971">
    <property type="entry name" value="Globin"/>
</dbReference>
<dbReference type="InterPro" id="IPR009050">
    <property type="entry name" value="Globin-like_sf"/>
</dbReference>
<dbReference type="InterPro" id="IPR012292">
    <property type="entry name" value="Globin/Proto"/>
</dbReference>
<dbReference type="InterPro" id="IPR002337">
    <property type="entry name" value="Hemoglobin_b"/>
</dbReference>
<dbReference type="InterPro" id="IPR050056">
    <property type="entry name" value="Hemoglobin_oxygen_transport"/>
</dbReference>
<dbReference type="PANTHER" id="PTHR11442">
    <property type="entry name" value="HEMOGLOBIN FAMILY MEMBER"/>
    <property type="match status" value="1"/>
</dbReference>
<dbReference type="PANTHER" id="PTHR11442:SF42">
    <property type="entry name" value="HEMOGLOBIN SUBUNIT BETA"/>
    <property type="match status" value="1"/>
</dbReference>
<dbReference type="Pfam" id="PF00042">
    <property type="entry name" value="Globin"/>
    <property type="match status" value="1"/>
</dbReference>
<dbReference type="PRINTS" id="PR00814">
    <property type="entry name" value="BETAHAEM"/>
</dbReference>
<dbReference type="SUPFAM" id="SSF46458">
    <property type="entry name" value="Globin-like"/>
    <property type="match status" value="1"/>
</dbReference>
<dbReference type="PROSITE" id="PS01033">
    <property type="entry name" value="GLOBIN"/>
    <property type="match status" value="1"/>
</dbReference>
<sequence>MVHLTGEEKAAVTGLWSKVNVDEVGGEALGRLLVVYPWTQRFFDSFGDLSTPDAVMNNPKVKAHGKKVLNSFSEGLKNLDNLKGTFAKLSELHCDKLHVDPENFKLLGNVLVCVLAHHFGKEFTPQVQAAYQKVVAGVANALAHKYH</sequence>